<comment type="function">
    <text evidence="1">Signal transduction protein, which is a major regulator of staphylococcal pathogenesis. Phosphorylated TRAP leads to the activation of agr system and consequent RNAIII synthesis resulting in the expression of several virulence factors. Up-regulates the expression of most toxins and genes known to be necessary for biofilm formation (By similarity).</text>
</comment>
<comment type="subcellular location">
    <subcellularLocation>
        <location>Membrane</location>
    </subcellularLocation>
    <text evidence="1">Membrane-associated.</text>
</comment>
<comment type="PTM">
    <text evidence="1">Each of the three conserved histidine residues contributes to TRAP phosphorylation. Phosphorylation is essential for TRAP activity (By similarity).</text>
</comment>
<comment type="PTM">
    <text evidence="1">Phosphorylation of TRAP is activated by RAP and necessary for the induction of RNAIII gene expression but not for ongoing transcription. TRAP is dephosphorylated from the mid-exponential phase of growth, which is when agr is activated and AIP is produced. RIP acts by inhibiting TRAP phosphorylation (By similarity).</text>
</comment>
<comment type="similarity">
    <text evidence="2">Belongs to the TRAP family.</text>
</comment>
<accession>Q7A4W3</accession>
<name>TRAP_STAAN</name>
<organism>
    <name type="scientific">Staphylococcus aureus (strain N315)</name>
    <dbReference type="NCBI Taxonomy" id="158879"/>
    <lineage>
        <taxon>Bacteria</taxon>
        <taxon>Bacillati</taxon>
        <taxon>Bacillota</taxon>
        <taxon>Bacilli</taxon>
        <taxon>Bacillales</taxon>
        <taxon>Staphylococcaceae</taxon>
        <taxon>Staphylococcus</taxon>
    </lineage>
</organism>
<feature type="chain" id="PRO_0000289342" description="Signal transduction protein TRAP">
    <location>
        <begin position="1"/>
        <end position="167"/>
    </location>
</feature>
<feature type="domain" description="ABM">
    <location>
        <begin position="67"/>
        <end position="158"/>
    </location>
</feature>
<feature type="modified residue" description="Phosphohistidine" evidence="1">
    <location>
        <position position="66"/>
    </location>
</feature>
<feature type="modified residue" description="Phosphohistidine" evidence="1">
    <location>
        <position position="79"/>
    </location>
</feature>
<feature type="modified residue" description="Phosphohistidine" evidence="1">
    <location>
        <position position="154"/>
    </location>
</feature>
<gene>
    <name type="primary">traP</name>
    <name type="ordered locus">SA1653</name>
</gene>
<protein>
    <recommendedName>
        <fullName>Signal transduction protein TRAP</fullName>
    </recommendedName>
    <alternativeName>
        <fullName>Target of RNAIII-activating protein</fullName>
    </alternativeName>
</protein>
<dbReference type="EMBL" id="BA000018">
    <property type="protein sequence ID" value="BAB42921.1"/>
    <property type="molecule type" value="Genomic_DNA"/>
</dbReference>
<dbReference type="PIR" id="B89970">
    <property type="entry name" value="B89970"/>
</dbReference>
<dbReference type="RefSeq" id="WP_000737976.1">
    <property type="nucleotide sequence ID" value="NC_002745.2"/>
</dbReference>
<dbReference type="SMR" id="Q7A4W3"/>
<dbReference type="EnsemblBacteria" id="BAB42921">
    <property type="protein sequence ID" value="BAB42921"/>
    <property type="gene ID" value="BAB42921"/>
</dbReference>
<dbReference type="KEGG" id="sau:SA1653"/>
<dbReference type="HOGENOM" id="CLU_116220_0_0_9"/>
<dbReference type="GO" id="GO:0016020">
    <property type="term" value="C:membrane"/>
    <property type="evidence" value="ECO:0007669"/>
    <property type="project" value="UniProtKB-SubCell"/>
</dbReference>
<dbReference type="Gene3D" id="3.30.70.100">
    <property type="match status" value="1"/>
</dbReference>
<dbReference type="InterPro" id="IPR007138">
    <property type="entry name" value="ABM_dom"/>
</dbReference>
<dbReference type="InterPro" id="IPR011008">
    <property type="entry name" value="Dimeric_a/b-barrel"/>
</dbReference>
<dbReference type="InterPro" id="IPR050404">
    <property type="entry name" value="Heme-degrading_MO"/>
</dbReference>
<dbReference type="PANTHER" id="PTHR34474">
    <property type="entry name" value="SIGNAL TRANSDUCTION PROTEIN TRAP"/>
    <property type="match status" value="1"/>
</dbReference>
<dbReference type="PANTHER" id="PTHR34474:SF2">
    <property type="entry name" value="SIGNAL TRANSDUCTION PROTEIN TRAP"/>
    <property type="match status" value="1"/>
</dbReference>
<dbReference type="SUPFAM" id="SSF54909">
    <property type="entry name" value="Dimeric alpha+beta barrel"/>
    <property type="match status" value="1"/>
</dbReference>
<dbReference type="PROSITE" id="PS51725">
    <property type="entry name" value="ABM"/>
    <property type="match status" value="1"/>
</dbReference>
<proteinExistence type="evidence at protein level"/>
<evidence type="ECO:0000250" key="1"/>
<evidence type="ECO:0000305" key="2"/>
<reference key="1">
    <citation type="journal article" date="2001" name="Lancet">
        <title>Whole genome sequencing of meticillin-resistant Staphylococcus aureus.</title>
        <authorList>
            <person name="Kuroda M."/>
            <person name="Ohta T."/>
            <person name="Uchiyama I."/>
            <person name="Baba T."/>
            <person name="Yuzawa H."/>
            <person name="Kobayashi I."/>
            <person name="Cui L."/>
            <person name="Oguchi A."/>
            <person name="Aoki K."/>
            <person name="Nagai Y."/>
            <person name="Lian J.-Q."/>
            <person name="Ito T."/>
            <person name="Kanamori M."/>
            <person name="Matsumaru H."/>
            <person name="Maruyama A."/>
            <person name="Murakami H."/>
            <person name="Hosoyama A."/>
            <person name="Mizutani-Ui Y."/>
            <person name="Takahashi N.K."/>
            <person name="Sawano T."/>
            <person name="Inoue R."/>
            <person name="Kaito C."/>
            <person name="Sekimizu K."/>
            <person name="Hirakawa H."/>
            <person name="Kuhara S."/>
            <person name="Goto S."/>
            <person name="Yabuzaki J."/>
            <person name="Kanehisa M."/>
            <person name="Yamashita A."/>
            <person name="Oshima K."/>
            <person name="Furuya K."/>
            <person name="Yoshino C."/>
            <person name="Shiba T."/>
            <person name="Hattori M."/>
            <person name="Ogasawara N."/>
            <person name="Hayashi H."/>
            <person name="Hiramatsu K."/>
        </authorList>
    </citation>
    <scope>NUCLEOTIDE SEQUENCE [LARGE SCALE GENOMIC DNA]</scope>
    <source>
        <strain>N315</strain>
    </source>
</reference>
<reference key="2">
    <citation type="submission" date="2005-11" db="UniProtKB">
        <title>Shotgun proteomic analysis of total protein extract of S. aureus S30 versus N315.</title>
        <authorList>
            <person name="Stenz L."/>
        </authorList>
    </citation>
    <scope>IDENTIFICATION BY MASS SPECTROMETRY</scope>
</reference>
<reference key="3">
    <citation type="submission" date="2007-10" db="UniProtKB">
        <title>Shotgun proteomic analysis of total and membrane protein extracts of S. aureus strain N315.</title>
        <authorList>
            <person name="Vaezzadeh A.R."/>
            <person name="Deshusses J."/>
            <person name="Lescuyer P."/>
            <person name="Hochstrasser D.F."/>
        </authorList>
    </citation>
    <scope>IDENTIFICATION BY MASS SPECTROMETRY [LARGE SCALE ANALYSIS]</scope>
    <source>
        <strain>N315</strain>
    </source>
</reference>
<keyword id="KW-0472">Membrane</keyword>
<keyword id="KW-0597">Phosphoprotein</keyword>
<keyword id="KW-0843">Virulence</keyword>
<sequence length="167" mass="19548">MKKLYTSYGTYGFLHQIKINNPTHQLFQFSASDTSVIFEETDGETVLKSPSIYEVIKEIGEFSEHHFYCAIFIPSTEDHAYQLEKKLISVDDNFRNFGGFKSYRLLRPAKGTTYKIYFGFADRHAYEDFKQSDAFNDHFSKDALSHYFGSSGQHSSYFERYLYPIKE</sequence>